<protein>
    <recommendedName>
        <fullName evidence="1 11">L-fuculose phosphate aldolase</fullName>
        <ecNumber evidence="1 2 3 4 9 10">4.1.2.17</ecNumber>
    </recommendedName>
    <alternativeName>
        <fullName evidence="1 11">D-ribulose-phosphate aldolase</fullName>
    </alternativeName>
    <alternativeName>
        <fullName evidence="1 11">L-fuculose-1-phosphate aldolase</fullName>
    </alternativeName>
</protein>
<reference key="1">
    <citation type="journal article" date="1989" name="Nucleic Acids Res.">
        <title>The nucleotide sequence of Escherichia coli genes for L-fucose dissimilation.</title>
        <authorList>
            <person name="Lu Z."/>
            <person name="Lin E.C.C."/>
        </authorList>
    </citation>
    <scope>NUCLEOTIDE SEQUENCE [GENOMIC DNA]</scope>
    <source>
        <strain>K12</strain>
    </source>
</reference>
<reference key="2">
    <citation type="journal article" date="1989" name="J. Bacteriol.">
        <title>Constitutive activation of the fucAO operon and silencing of the divergently transcribed fucPIK operon by an IS5 element in Escherichia coli mutants selected for growth on L-1,2-propanediol.</title>
        <authorList>
            <person name="Chen Y.M."/>
            <person name="Lu Z."/>
            <person name="Lin E.C.C."/>
        </authorList>
    </citation>
    <scope>NUCLEOTIDE SEQUENCE [GENOMIC DNA]</scope>
    <source>
        <strain>K12</strain>
    </source>
</reference>
<reference key="3">
    <citation type="journal article" date="1997" name="Science">
        <title>The complete genome sequence of Escherichia coli K-12.</title>
        <authorList>
            <person name="Blattner F.R."/>
            <person name="Plunkett G. III"/>
            <person name="Bloch C.A."/>
            <person name="Perna N.T."/>
            <person name="Burland V."/>
            <person name="Riley M."/>
            <person name="Collado-Vides J."/>
            <person name="Glasner J.D."/>
            <person name="Rode C.K."/>
            <person name="Mayhew G.F."/>
            <person name="Gregor J."/>
            <person name="Davis N.W."/>
            <person name="Kirkpatrick H.A."/>
            <person name="Goeden M.A."/>
            <person name="Rose D.J."/>
            <person name="Mau B."/>
            <person name="Shao Y."/>
        </authorList>
    </citation>
    <scope>NUCLEOTIDE SEQUENCE [LARGE SCALE GENOMIC DNA]</scope>
    <source>
        <strain>K12 / MG1655 / ATCC 47076</strain>
    </source>
</reference>
<reference key="4">
    <citation type="journal article" date="2006" name="Mol. Syst. Biol.">
        <title>Highly accurate genome sequences of Escherichia coli K-12 strains MG1655 and W3110.</title>
        <authorList>
            <person name="Hayashi K."/>
            <person name="Morooka N."/>
            <person name="Yamamoto Y."/>
            <person name="Fujita K."/>
            <person name="Isono K."/>
            <person name="Choi S."/>
            <person name="Ohtsubo E."/>
            <person name="Baba T."/>
            <person name="Wanner B.L."/>
            <person name="Mori H."/>
            <person name="Horiuchi T."/>
        </authorList>
    </citation>
    <scope>NUCLEOTIDE SEQUENCE [LARGE SCALE GENOMIC DNA]</scope>
    <source>
        <strain>K12 / W3110 / ATCC 27325 / DSM 5911</strain>
    </source>
</reference>
<reference key="5">
    <citation type="journal article" date="1989" name="J. Bacteriol.">
        <title>Similarity of Escherichia coli propanediol oxidoreductase (fucO product) and an unusual alcohol dehydrogenase from Zymomonas mobilis and Saccharomyces cerevisiae.</title>
        <authorList>
            <person name="Conway T."/>
            <person name="Ingram L.O."/>
        </authorList>
    </citation>
    <scope>NUCLEOTIDE SEQUENCE [GENOMIC DNA] OF 108-215</scope>
    <source>
        <strain>K12</strain>
    </source>
</reference>
<reference key="6">
    <citation type="journal article" date="1962" name="J. Biol. Chem.">
        <title>The metabolism of L-fucose. II. The enzymatic cleavage of L-fuculose 1-phosphate.</title>
        <authorList>
            <person name="Ghalambor M.A."/>
            <person name="Heath E.C."/>
        </authorList>
    </citation>
    <scope>FUNCTION</scope>
    <scope>CATALYTIC ACTIVITY</scope>
    <scope>BIOPHYSICOCHEMICAL PROPERTIES</scope>
    <scope>COFACTOR</scope>
    <scope>PATHWAY</scope>
    <scope>SUBSTRATE SPECIFICITY</scope>
    <source>
        <strain>O111:B4</strain>
    </source>
</reference>
<reference key="7">
    <citation type="journal article" date="1971" name="J. Bacteriol.">
        <title>Metabolism of D-arabinose: a new pathway in Escherichia coli.</title>
        <authorList>
            <person name="LeBlanc D.J."/>
            <person name="Mortlock R.P."/>
        </authorList>
    </citation>
    <scope>FUNCTION</scope>
    <scope>INDUCTION BY L-FUCOSE</scope>
    <source>
        <strain>K12</strain>
    </source>
</reference>
<reference key="8">
    <citation type="journal article" date="1991" name="Angew. Chem. Int. Ed.">
        <title>Diastereoselective enzymatic aldol additions: L-rhamnulose and L-fuculose 1-phosphate aldolases from E. coli.</title>
        <authorList>
            <person name="Fessner W.-D."/>
            <person name="Sinerius G."/>
            <person name="Schneider A."/>
            <person name="Dreyer M."/>
            <person name="Schulz G.E."/>
            <person name="Badia J."/>
            <person name="Aguilar J."/>
        </authorList>
    </citation>
    <scope>FUNCTION</scope>
    <scope>CATALYTIC ACTIVITY</scope>
    <scope>SUBSTRATE SPECIFICITY</scope>
</reference>
<reference key="9">
    <citation type="journal article" date="1996" name="Angew. Chem. Int. Ed.">
        <title>The mechanism of class II, metal-dependent aldolases.</title>
        <authorList>
            <person name="Fessner W.-D."/>
            <person name="Schneider A."/>
            <person name="Held H."/>
            <person name="Sinerius G."/>
            <person name="Walter C."/>
            <person name="Hixon M."/>
            <person name="Schloss J.V."/>
        </authorList>
    </citation>
    <scope>FUNCTION</scope>
    <scope>CATALYTIC ACTIVITY</scope>
    <scope>BIOPHYSICOCHEMICAL PROPERTIES</scope>
    <scope>ACTIVITY REGULATION</scope>
</reference>
<reference key="10">
    <citation type="journal article" date="1993" name="J. Mol. Biol.">
        <title>The spatial structure of the class II L-fuculose-1-phosphate aldolase from Escherichia coli.</title>
        <authorList>
            <person name="Dreyer M.K."/>
            <person name="Schulz G.E."/>
        </authorList>
    </citation>
    <scope>X-RAY CRYSTALLOGRAPHY (2.13 ANGSTROMS)</scope>
    <scope>COFACTOR</scope>
    <scope>SUBUNIT</scope>
</reference>
<reference key="11">
    <citation type="journal article" date="1996" name="Acta Crystallogr. D">
        <title>Refined high-resolution structure of the metal-ion dependent L-fuculose-1-phosphate aldolase (class II) from Escherichia coli.</title>
        <authorList>
            <person name="Dreyer M.K."/>
            <person name="Schulz G.E."/>
        </authorList>
    </citation>
    <scope>X-RAY CRYSTALLOGRAPHY (1.92 ANGSTROMS) IN COMPLEX WITH ZINC ION</scope>
    <scope>COFACTOR</scope>
    <scope>SUBUNIT</scope>
</reference>
<reference key="12">
    <citation type="journal article" date="1996" name="J. Mol. Biol.">
        <title>Catalytic mechanism of the metal-dependent fuculose aldolase from Escherichia coli as derived from the structure.</title>
        <authorList>
            <person name="Dreyer M.K."/>
            <person name="Schulz G.E."/>
        </authorList>
    </citation>
    <scope>X-RAY CRYSTALLOGRAPHY (2.43 ANGSTROMS) IN COMPLEX WITH SUBSTRATE ANALOG AND ZINC ION</scope>
    <scope>COFACTOR</scope>
    <scope>SUBUNIT</scope>
</reference>
<reference key="13">
    <citation type="journal article" date="2000" name="Biochemistry">
        <title>Catalytic action of fuculose 1-phosphate aldolase (class II) as derived from structure-directed mutagenesis.</title>
        <authorList>
            <person name="Joerger A.C."/>
            <person name="Gosse C."/>
            <person name="Fessner W.-D."/>
            <person name="Schulz G.E."/>
        </authorList>
    </citation>
    <scope>X-RAY CRYSTALLOGRAPHY (1.86 ANGSTROMS) OF WILD TYPE AND MUTANTS IN COMPLEX WITH ZINC ION</scope>
    <scope>FUNCTION</scope>
    <scope>CATALYTIC ACTIVITY</scope>
    <scope>BIOPHYSICOCHEMICAL PROPERTIES</scope>
    <scope>MUTAGENESIS OF THR-26; GLU-73; TYR-113; PHE-131; PHE-206; 207-LYS--GLU-215; TYR-209 AND 211-LEU--GLU-215</scope>
    <scope>COFACTOR</scope>
    <scope>ACTIVE SITE</scope>
    <scope>REACTION MECHANISM</scope>
    <scope>SUBSTRATE SPECIFICITY</scope>
    <scope>SUBUNIT</scope>
</reference>
<reference key="14">
    <citation type="journal article" date="2000" name="J. Mol. Biol.">
        <title>Structures of L-fuculose-1-phosphate aldolase mutants outlining motions during catalysis.</title>
        <authorList>
            <person name="Joerger A.C."/>
            <person name="Mueller-Dieckmann C."/>
            <person name="Schulz G.E."/>
        </authorList>
    </citation>
    <scope>X-RAY CRYSTALLOGRAPHY (1.66 ANGSTROMS) OF WILD TYPE AND MUTANTS IN COMPLEX WITH SUBSTRATE ANALOG AND ZINC ION</scope>
    <scope>FUNCTION</scope>
    <scope>CATALYTIC ACTIVITY</scope>
    <scope>MUTAGENESIS OF ALA-27; ASN-29; SER-71; GLU-73; TYR-113 AND TYR-209</scope>
    <scope>COFACTOR</scope>
    <scope>REACTION MECHANISM</scope>
    <scope>ACTIVE SITE</scope>
    <scope>SUBUNIT</scope>
</reference>
<comment type="function">
    <text evidence="2 3 4 6 9 10">Involved in the degradation of L-fucose and D-arabinose (PubMed:13898172). Catalyzes the reversible cleavage of L-fuculose 1-phosphate (Fuc1P) to yield dihydroxyacetone phosphate (DHAP) and L-lactaldehyde (PubMed:10821675, PubMed:11054289, PubMed:13898172, Ref.8, Ref.9). Also able to catalyze the reversible cleavage of D-ribulose 1-phosphate, but FucA has a higher affinity for L-fuculose 1-phosphate and L-lactaldehyde than for D-ribulose 1-phosphate and glycolaldehyde, respectively (PubMed:4928018). FucA possesses a high specificity for the dihydroxyacetone phosphate (DHAP), but accepts a great variety of different aldehydes and has a strong preference for L-configurated alpha-hydroxy aldehydes (PubMed:10821675, PubMed:13898172, Ref.8). FucA generates a vicinal diol unit having the absolute (3R,4R)-cis configuration (D-erythro) (PubMed:10821675, Ref.8).</text>
</comment>
<comment type="catalytic activity">
    <reaction evidence="1 2 3 4 9 10">
        <text>L-fuculose 1-phosphate = (S)-lactaldehyde + dihydroxyacetone phosphate</text>
        <dbReference type="Rhea" id="RHEA:12933"/>
        <dbReference type="ChEBI" id="CHEBI:18041"/>
        <dbReference type="ChEBI" id="CHEBI:57642"/>
        <dbReference type="ChEBI" id="CHEBI:57846"/>
        <dbReference type="EC" id="4.1.2.17"/>
    </reaction>
</comment>
<comment type="cofactor">
    <cofactor evidence="1 2 3 4 5 7 8">
        <name>Zn(2+)</name>
        <dbReference type="ChEBI" id="CHEBI:29105"/>
    </cofactor>
    <text evidence="1 2 3 5 7 8">Binds 1 zinc ion per subunit.</text>
</comment>
<comment type="activity regulation">
    <text evidence="10">Inhibited by phosphoglycolohydroxamate (PGH).</text>
</comment>
<comment type="biophysicochemical properties">
    <kinetics>
        <KM evidence="4">0.7 mM for L-fuculose 1-phosphate (Fuc1P)</KM>
        <KM evidence="10">1.5 mM for L-fuculose 1-phosphate (Fuc1P)</KM>
        <KM evidence="2">2.2 mM for L-fuculose 1-phosphate (Fuc1P)</KM>
        <text evidence="2">kcat is 19.3 sec(-1) for L-fuculose 1-phosphate (Fuc1P) as substrate.</text>
    </kinetics>
    <phDependence>
        <text evidence="4">Optimum pH is 7.2.</text>
    </phDependence>
</comment>
<comment type="pathway">
    <text evidence="1 4">Carbohydrate degradation; L-fucose degradation; L-lactaldehyde and glycerone phosphate from L-fucose: step 3/3.</text>
</comment>
<comment type="subunit">
    <text evidence="1 2 3 5 7 8">Homotetramer.</text>
</comment>
<comment type="induction">
    <text evidence="6">By L-fucose.</text>
</comment>
<comment type="miscellaneous">
    <text evidence="2 3">During catalysis the binding of dihydroxyacetone phosphate (DHAP) frees Glu-73 residue from its interaction with zinc ion (PubMed:10821675, PubMed:11054289). Then Glu-73 residue abstracts a proton from the C3 atom of dihydroxyacetone phosphate (DHAP) (or from the O4 atom of L-fuculose 1-phosphate (Fuc1P) in the backward reaction), and moves to transfer its proton to the aldehyde oxygen atom (or to the C3 atom of dihydroxyacetone phosphate (DHAP)) (PubMed:10821675, PubMed:11054289).</text>
</comment>
<comment type="similarity">
    <text evidence="1 13">Belongs to the aldolase class II family. AraD/FucA subfamily.</text>
</comment>
<gene>
    <name evidence="1 12" type="primary">fucA</name>
    <name type="synonym">fucC</name>
    <name type="synonym">prd</name>
    <name type="ordered locus">b2800</name>
    <name type="ordered locus">JW2771</name>
</gene>
<keyword id="KW-0002">3D-structure</keyword>
<keyword id="KW-0054">Arabinose catabolism</keyword>
<keyword id="KW-0119">Carbohydrate metabolism</keyword>
<keyword id="KW-0294">Fucose metabolism</keyword>
<keyword id="KW-0456">Lyase</keyword>
<keyword id="KW-0479">Metal-binding</keyword>
<keyword id="KW-1185">Reference proteome</keyword>
<keyword id="KW-0862">Zinc</keyword>
<accession>P0AB87</accession>
<accession>P11550</accession>
<accession>Q2MA34</accession>
<evidence type="ECO:0000255" key="1">
    <source>
        <dbReference type="HAMAP-Rule" id="MF_00987"/>
    </source>
</evidence>
<evidence type="ECO:0000269" key="2">
    <source>
    </source>
</evidence>
<evidence type="ECO:0000269" key="3">
    <source>
    </source>
</evidence>
<evidence type="ECO:0000269" key="4">
    <source>
    </source>
</evidence>
<evidence type="ECO:0000269" key="5">
    <source>
    </source>
</evidence>
<evidence type="ECO:0000269" key="6">
    <source>
    </source>
</evidence>
<evidence type="ECO:0000269" key="7">
    <source>
    </source>
</evidence>
<evidence type="ECO:0000269" key="8">
    <source>
    </source>
</evidence>
<evidence type="ECO:0000269" key="9">
    <source ref="8"/>
</evidence>
<evidence type="ECO:0000269" key="10">
    <source ref="9"/>
</evidence>
<evidence type="ECO:0000303" key="11">
    <source>
    </source>
</evidence>
<evidence type="ECO:0000303" key="12">
    <source>
    </source>
</evidence>
<evidence type="ECO:0000305" key="13"/>
<evidence type="ECO:0007744" key="14">
    <source>
        <dbReference type="PDB" id="1DZU"/>
    </source>
</evidence>
<evidence type="ECO:0007744" key="15">
    <source>
        <dbReference type="PDB" id="1DZV"/>
    </source>
</evidence>
<evidence type="ECO:0007744" key="16">
    <source>
        <dbReference type="PDB" id="1DZW"/>
    </source>
</evidence>
<evidence type="ECO:0007744" key="17">
    <source>
        <dbReference type="PDB" id="1DZX"/>
    </source>
</evidence>
<evidence type="ECO:0007744" key="18">
    <source>
        <dbReference type="PDB" id="1DZY"/>
    </source>
</evidence>
<evidence type="ECO:0007744" key="19">
    <source>
        <dbReference type="PDB" id="1DZZ"/>
    </source>
</evidence>
<evidence type="ECO:0007744" key="20">
    <source>
        <dbReference type="PDB" id="1E46"/>
    </source>
</evidence>
<evidence type="ECO:0007744" key="21">
    <source>
        <dbReference type="PDB" id="1E47"/>
    </source>
</evidence>
<evidence type="ECO:0007744" key="22">
    <source>
        <dbReference type="PDB" id="1E48"/>
    </source>
</evidence>
<evidence type="ECO:0007744" key="23">
    <source>
        <dbReference type="PDB" id="1E49"/>
    </source>
</evidence>
<evidence type="ECO:0007744" key="24">
    <source>
        <dbReference type="PDB" id="1E4A"/>
    </source>
</evidence>
<evidence type="ECO:0007744" key="25">
    <source>
        <dbReference type="PDB" id="1E4B"/>
    </source>
</evidence>
<evidence type="ECO:0007744" key="26">
    <source>
        <dbReference type="PDB" id="1E4C"/>
    </source>
</evidence>
<evidence type="ECO:0007744" key="27">
    <source>
        <dbReference type="PDB" id="1FUA"/>
    </source>
</evidence>
<evidence type="ECO:0007744" key="28">
    <source>
        <dbReference type="PDB" id="2FUA"/>
    </source>
</evidence>
<evidence type="ECO:0007744" key="29">
    <source>
        <dbReference type="PDB" id="3FUA"/>
    </source>
</evidence>
<evidence type="ECO:0007744" key="30">
    <source>
        <dbReference type="PDB" id="4FUA"/>
    </source>
</evidence>
<evidence type="ECO:0007829" key="31">
    <source>
        <dbReference type="PDB" id="1E46"/>
    </source>
</evidence>
<evidence type="ECO:0007829" key="32">
    <source>
        <dbReference type="PDB" id="1E47"/>
    </source>
</evidence>
<evidence type="ECO:0007829" key="33">
    <source>
        <dbReference type="PDB" id="1E4B"/>
    </source>
</evidence>
<evidence type="ECO:0007829" key="34">
    <source>
        <dbReference type="PDB" id="1E4C"/>
    </source>
</evidence>
<evidence type="ECO:0007829" key="35">
    <source>
        <dbReference type="PDB" id="2FUA"/>
    </source>
</evidence>
<name>FUCA_ECOLI</name>
<sequence length="215" mass="23775">MERNKLARQIIDTCLEMTRLGLNQGTAGNVSVRYQDGMLITPTGIPYEKLTESHIVFIDGNGKHEEGKLPSSEWRFHMAAYQSRPDANAVVHNHAVHCTAVSILNRSIPAIHYMIAAAGGNSIPCAPYATFGTRELSEHVALALKNRKATLLQHHGLIACEVNLEKALWLAHEVEVLAQLYLTTLAITDPVPVLSDEEIAVVLEKFKTYGLRIEE</sequence>
<proteinExistence type="evidence at protein level"/>
<organism>
    <name type="scientific">Escherichia coli (strain K12)</name>
    <dbReference type="NCBI Taxonomy" id="83333"/>
    <lineage>
        <taxon>Bacteria</taxon>
        <taxon>Pseudomonadati</taxon>
        <taxon>Pseudomonadota</taxon>
        <taxon>Gammaproteobacteria</taxon>
        <taxon>Enterobacterales</taxon>
        <taxon>Enterobacteriaceae</taxon>
        <taxon>Escherichia</taxon>
    </lineage>
</organism>
<dbReference type="EC" id="4.1.2.17" evidence="1 2 3 4 9 10"/>
<dbReference type="EMBL" id="M31059">
    <property type="protein sequence ID" value="AAA23823.1"/>
    <property type="molecule type" value="Genomic_DNA"/>
</dbReference>
<dbReference type="EMBL" id="X15025">
    <property type="protein sequence ID" value="CAA33125.1"/>
    <property type="molecule type" value="Genomic_DNA"/>
</dbReference>
<dbReference type="EMBL" id="U29581">
    <property type="protein sequence ID" value="AAB40450.1"/>
    <property type="molecule type" value="Genomic_DNA"/>
</dbReference>
<dbReference type="EMBL" id="U00096">
    <property type="protein sequence ID" value="AAC75842.1"/>
    <property type="molecule type" value="Genomic_DNA"/>
</dbReference>
<dbReference type="EMBL" id="AP009048">
    <property type="protein sequence ID" value="BAE76872.1"/>
    <property type="molecule type" value="Genomic_DNA"/>
</dbReference>
<dbReference type="EMBL" id="M27177">
    <property type="status" value="NOT_ANNOTATED_CDS"/>
    <property type="molecule type" value="Genomic_DNA"/>
</dbReference>
<dbReference type="PIR" id="B33495">
    <property type="entry name" value="ADECFP"/>
</dbReference>
<dbReference type="RefSeq" id="NP_417280.1">
    <property type="nucleotide sequence ID" value="NC_000913.3"/>
</dbReference>
<dbReference type="RefSeq" id="WP_000440781.1">
    <property type="nucleotide sequence ID" value="NZ_LN832404.1"/>
</dbReference>
<dbReference type="PDB" id="1DZU">
    <property type="method" value="X-ray"/>
    <property type="resolution" value="2.09 A"/>
    <property type="chains" value="P=1-215"/>
</dbReference>
<dbReference type="PDB" id="1DZV">
    <property type="method" value="X-ray"/>
    <property type="resolution" value="1.86 A"/>
    <property type="chains" value="P=1-215"/>
</dbReference>
<dbReference type="PDB" id="1DZW">
    <property type="method" value="X-ray"/>
    <property type="resolution" value="2.17 A"/>
    <property type="chains" value="P=1-215"/>
</dbReference>
<dbReference type="PDB" id="1DZX">
    <property type="method" value="X-ray"/>
    <property type="resolution" value="2.18 A"/>
    <property type="chains" value="P=1-215"/>
</dbReference>
<dbReference type="PDB" id="1DZY">
    <property type="method" value="X-ray"/>
    <property type="resolution" value="2.44 A"/>
    <property type="chains" value="P=1-213"/>
</dbReference>
<dbReference type="PDB" id="1DZZ">
    <property type="method" value="X-ray"/>
    <property type="resolution" value="1.92 A"/>
    <property type="chains" value="P=1-215"/>
</dbReference>
<dbReference type="PDB" id="1E46">
    <property type="method" value="X-ray"/>
    <property type="resolution" value="2.55 A"/>
    <property type="chains" value="P=1-215"/>
</dbReference>
<dbReference type="PDB" id="1E47">
    <property type="method" value="X-ray"/>
    <property type="resolution" value="2.15 A"/>
    <property type="chains" value="P=1-215"/>
</dbReference>
<dbReference type="PDB" id="1E48">
    <property type="method" value="X-ray"/>
    <property type="resolution" value="1.97 A"/>
    <property type="chains" value="P=1-215"/>
</dbReference>
<dbReference type="PDB" id="1E49">
    <property type="method" value="X-ray"/>
    <property type="resolution" value="2.53 A"/>
    <property type="chains" value="P=1-215"/>
</dbReference>
<dbReference type="PDB" id="1E4A">
    <property type="method" value="X-ray"/>
    <property type="resolution" value="2.15 A"/>
    <property type="chains" value="P=1-215"/>
</dbReference>
<dbReference type="PDB" id="1E4B">
    <property type="method" value="X-ray"/>
    <property type="resolution" value="1.84 A"/>
    <property type="chains" value="P=1-215"/>
</dbReference>
<dbReference type="PDB" id="1E4C">
    <property type="method" value="X-ray"/>
    <property type="resolution" value="1.66 A"/>
    <property type="chains" value="P=1-215"/>
</dbReference>
<dbReference type="PDB" id="1FUA">
    <property type="method" value="X-ray"/>
    <property type="resolution" value="1.92 A"/>
    <property type="chains" value="A=1-215"/>
</dbReference>
<dbReference type="PDB" id="2FUA">
    <property type="method" value="X-ray"/>
    <property type="resolution" value="2.00 A"/>
    <property type="chains" value="A=1-215"/>
</dbReference>
<dbReference type="PDB" id="3FUA">
    <property type="method" value="X-ray"/>
    <property type="resolution" value="2.67 A"/>
    <property type="chains" value="A=1-215"/>
</dbReference>
<dbReference type="PDB" id="4FUA">
    <property type="method" value="X-ray"/>
    <property type="resolution" value="2.43 A"/>
    <property type="chains" value="A=1-215"/>
</dbReference>
<dbReference type="PDBsum" id="1DZU"/>
<dbReference type="PDBsum" id="1DZV"/>
<dbReference type="PDBsum" id="1DZW"/>
<dbReference type="PDBsum" id="1DZX"/>
<dbReference type="PDBsum" id="1DZY"/>
<dbReference type="PDBsum" id="1DZZ"/>
<dbReference type="PDBsum" id="1E46"/>
<dbReference type="PDBsum" id="1E47"/>
<dbReference type="PDBsum" id="1E48"/>
<dbReference type="PDBsum" id="1E49"/>
<dbReference type="PDBsum" id="1E4A"/>
<dbReference type="PDBsum" id="1E4B"/>
<dbReference type="PDBsum" id="1E4C"/>
<dbReference type="PDBsum" id="1FUA"/>
<dbReference type="PDBsum" id="2FUA"/>
<dbReference type="PDBsum" id="3FUA"/>
<dbReference type="PDBsum" id="4FUA"/>
<dbReference type="SMR" id="P0AB87"/>
<dbReference type="BioGRID" id="4259224">
    <property type="interactions" value="22"/>
</dbReference>
<dbReference type="DIP" id="DIP-9710N"/>
<dbReference type="FunCoup" id="P0AB87">
    <property type="interactions" value="510"/>
</dbReference>
<dbReference type="IntAct" id="P0AB87">
    <property type="interactions" value="1"/>
</dbReference>
<dbReference type="STRING" id="511145.b2800"/>
<dbReference type="DrugBank" id="DB04326">
    <property type="generic name" value="Dihydroxyacetone phosphate"/>
</dbReference>
<dbReference type="DrugBank" id="DB03026">
    <property type="generic name" value="Phosphoglycolohydroxamic Acid"/>
</dbReference>
<dbReference type="jPOST" id="P0AB87"/>
<dbReference type="PaxDb" id="511145-b2800"/>
<dbReference type="EnsemblBacteria" id="AAC75842">
    <property type="protein sequence ID" value="AAC75842"/>
    <property type="gene ID" value="b2800"/>
</dbReference>
<dbReference type="GeneID" id="75172884"/>
<dbReference type="GeneID" id="947282"/>
<dbReference type="KEGG" id="ecj:JW2771"/>
<dbReference type="KEGG" id="eco:b2800"/>
<dbReference type="KEGG" id="ecoc:C3026_15395"/>
<dbReference type="PATRIC" id="fig|1411691.4.peg.3933"/>
<dbReference type="EchoBASE" id="EB0344"/>
<dbReference type="eggNOG" id="COG0235">
    <property type="taxonomic scope" value="Bacteria"/>
</dbReference>
<dbReference type="HOGENOM" id="CLU_006033_3_0_6"/>
<dbReference type="InParanoid" id="P0AB87"/>
<dbReference type="OMA" id="YATFGTH"/>
<dbReference type="OrthoDB" id="5500703at2"/>
<dbReference type="PhylomeDB" id="P0AB87"/>
<dbReference type="BioCyc" id="EcoCyc:FUCPALDOL-MONOMER"/>
<dbReference type="BioCyc" id="MetaCyc:FUCPALDOL-MONOMER"/>
<dbReference type="BRENDA" id="4.1.2.17">
    <property type="organism ID" value="2026"/>
</dbReference>
<dbReference type="SABIO-RK" id="P0AB87"/>
<dbReference type="UniPathway" id="UPA00563">
    <property type="reaction ID" value="UER00626"/>
</dbReference>
<dbReference type="EvolutionaryTrace" id="P0AB87"/>
<dbReference type="PRO" id="PR:P0AB87"/>
<dbReference type="Proteomes" id="UP000000625">
    <property type="component" value="Chromosome"/>
</dbReference>
<dbReference type="GO" id="GO:0005829">
    <property type="term" value="C:cytosol"/>
    <property type="evidence" value="ECO:0000318"/>
    <property type="project" value="GO_Central"/>
</dbReference>
<dbReference type="GO" id="GO:0016832">
    <property type="term" value="F:aldehyde-lyase activity"/>
    <property type="evidence" value="ECO:0000314"/>
    <property type="project" value="EcoCyc"/>
</dbReference>
<dbReference type="GO" id="GO:0008738">
    <property type="term" value="F:L-fuculose-phosphate aldolase activity"/>
    <property type="evidence" value="ECO:0000314"/>
    <property type="project" value="EcoCyc"/>
</dbReference>
<dbReference type="GO" id="GO:0008270">
    <property type="term" value="F:zinc ion binding"/>
    <property type="evidence" value="ECO:0000314"/>
    <property type="project" value="UniProtKB"/>
</dbReference>
<dbReference type="GO" id="GO:0019571">
    <property type="term" value="P:D-arabinose catabolic process"/>
    <property type="evidence" value="ECO:0000315"/>
    <property type="project" value="EcoCyc"/>
</dbReference>
<dbReference type="GO" id="GO:0042355">
    <property type="term" value="P:L-fucose catabolic process"/>
    <property type="evidence" value="ECO:0000315"/>
    <property type="project" value="EcoCyc"/>
</dbReference>
<dbReference type="GO" id="GO:0019323">
    <property type="term" value="P:pentose catabolic process"/>
    <property type="evidence" value="ECO:0000318"/>
    <property type="project" value="GO_Central"/>
</dbReference>
<dbReference type="CDD" id="cd00398">
    <property type="entry name" value="Aldolase_II"/>
    <property type="match status" value="1"/>
</dbReference>
<dbReference type="FunFam" id="3.40.225.10:FF:000005">
    <property type="entry name" value="L-fuculose phosphate aldolase"/>
    <property type="match status" value="1"/>
</dbReference>
<dbReference type="Gene3D" id="3.40.225.10">
    <property type="entry name" value="Class II aldolase/adducin N-terminal domain"/>
    <property type="match status" value="1"/>
</dbReference>
<dbReference type="HAMAP" id="MF_00987">
    <property type="entry name" value="FucA"/>
    <property type="match status" value="1"/>
</dbReference>
<dbReference type="InterPro" id="IPR050197">
    <property type="entry name" value="Aldolase_class_II_sugar_metab"/>
</dbReference>
<dbReference type="InterPro" id="IPR001303">
    <property type="entry name" value="Aldolase_II/adducin_N"/>
</dbReference>
<dbReference type="InterPro" id="IPR036409">
    <property type="entry name" value="Aldolase_II/adducin_N_sf"/>
</dbReference>
<dbReference type="InterPro" id="IPR004782">
    <property type="entry name" value="FucA"/>
</dbReference>
<dbReference type="NCBIfam" id="TIGR01086">
    <property type="entry name" value="fucA"/>
    <property type="match status" value="1"/>
</dbReference>
<dbReference type="NCBIfam" id="NF005984">
    <property type="entry name" value="PRK08087.1"/>
    <property type="match status" value="1"/>
</dbReference>
<dbReference type="PANTHER" id="PTHR22789:SF0">
    <property type="entry name" value="3-OXO-TETRONATE 4-PHOSPHATE DECARBOXYLASE-RELATED"/>
    <property type="match status" value="1"/>
</dbReference>
<dbReference type="PANTHER" id="PTHR22789">
    <property type="entry name" value="FUCULOSE PHOSPHATE ALDOLASE"/>
    <property type="match status" value="1"/>
</dbReference>
<dbReference type="Pfam" id="PF00596">
    <property type="entry name" value="Aldolase_II"/>
    <property type="match status" value="1"/>
</dbReference>
<dbReference type="SMART" id="SM01007">
    <property type="entry name" value="Aldolase_II"/>
    <property type="match status" value="1"/>
</dbReference>
<dbReference type="SUPFAM" id="SSF53639">
    <property type="entry name" value="AraD/HMP-PK domain-like"/>
    <property type="match status" value="1"/>
</dbReference>
<feature type="chain" id="PRO_0000162925" description="L-fuculose phosphate aldolase">
    <location>
        <begin position="1"/>
        <end position="215"/>
    </location>
</feature>
<feature type="active site" description="Proton donor/acceptor" evidence="2 3">
    <location>
        <position position="73"/>
    </location>
</feature>
<feature type="binding site" evidence="3 8 21 22 30">
    <location>
        <begin position="28"/>
        <end position="29"/>
    </location>
    <ligand>
        <name>substrate</name>
    </ligand>
</feature>
<feature type="binding site" evidence="3 8 21 22 30">
    <location>
        <begin position="43"/>
        <end position="44"/>
    </location>
    <ligand>
        <name>substrate</name>
    </ligand>
</feature>
<feature type="binding site" evidence="3 8 21 22 30">
    <location>
        <begin position="71"/>
        <end position="72"/>
    </location>
    <ligand>
        <name>substrate</name>
    </ligand>
</feature>
<feature type="binding site" evidence="1 2 3 5 8 14 15 16 17 18 19 22 23 24 25 26 27 28 29 30">
    <location>
        <position position="73"/>
    </location>
    <ligand>
        <name>Zn(2+)</name>
        <dbReference type="ChEBI" id="CHEBI:29105"/>
        <note>catalytic</note>
    </ligand>
</feature>
<feature type="binding site" evidence="1 2 3 5 8 14 15 16 17 18 19 20 21 22 23 24 25 26 27 28 29 30">
    <location>
        <position position="92"/>
    </location>
    <ligand>
        <name>Zn(2+)</name>
        <dbReference type="ChEBI" id="CHEBI:29105"/>
        <note>catalytic</note>
    </ligand>
</feature>
<feature type="binding site" evidence="1 2 3 5 8 14 15 16 17 18 19 20 21 22 23 24 25 26 27 28 29 30">
    <location>
        <position position="94"/>
    </location>
    <ligand>
        <name>Zn(2+)</name>
        <dbReference type="ChEBI" id="CHEBI:29105"/>
        <note>catalytic</note>
    </ligand>
</feature>
<feature type="binding site" evidence="1 2 3 5 8 14 15 16 17 18 19 20 21 22 23 24 25 26 27 28 29 30">
    <location>
        <position position="155"/>
    </location>
    <ligand>
        <name>Zn(2+)</name>
        <dbReference type="ChEBI" id="CHEBI:29105"/>
        <note>catalytic</note>
    </ligand>
</feature>
<feature type="site" description="Plays a key role in the stabilization of the transition state and positioning the aldehyde component" evidence="2">
    <location>
        <position position="113"/>
    </location>
</feature>
<feature type="site" description="Plays a key role in the stabilization of the transition state and positioning the aldehyde component" evidence="2">
    <location>
        <position position="131"/>
    </location>
</feature>
<feature type="site" description="Plays a key role in the stabilization of the transition state and positioning the aldehyde component" evidence="2">
    <location>
        <position position="209"/>
    </location>
</feature>
<feature type="mutagenesis site" description="Decrease of the aldolase activity mostly due to a decrease of the affinity for L-fuculose 1-phosphate (Fuc1P)." evidence="2">
    <original>T</original>
    <variation>A</variation>
    <location>
        <position position="26"/>
    </location>
</feature>
<feature type="mutagenesis site" description="Strong decrease of the aldolase activity." evidence="3">
    <location>
        <position position="27"/>
    </location>
</feature>
<feature type="mutagenesis site" description="Loss of aldolase activity; when associated with A-71." evidence="3">
    <original>N</original>
    <variation>L</variation>
    <location>
        <position position="29"/>
    </location>
</feature>
<feature type="mutagenesis site" description="Strong decrease of the aldolase activity mostly due to a decrease of the affinity for L-fuculose 1-phosphate (Fuc1P)." evidence="3">
    <original>N</original>
    <variation>Q</variation>
    <location>
        <position position="29"/>
    </location>
</feature>
<feature type="mutagenesis site" description="Loss of aldolase activity; when associated with L-29." evidence="3">
    <original>S</original>
    <variation>A</variation>
    <location>
        <position position="71"/>
    </location>
</feature>
<feature type="mutagenesis site" description="Loss of aldolase activity." evidence="3">
    <original>S</original>
    <variation>Q</variation>
    <location>
        <position position="71"/>
    </location>
</feature>
<feature type="mutagenesis site" description="Loss of aldolase activity; when associated with F-113 and F-209." evidence="3">
    <original>E</original>
    <variation>Q</variation>
    <location>
        <position position="73"/>
    </location>
</feature>
<feature type="mutagenesis site" description="Loss of aldolase activity." evidence="2 3">
    <original>E</original>
    <variation>S</variation>
    <location>
        <position position="73"/>
    </location>
</feature>
<feature type="mutagenesis site" description="Slowly inactivated. Has a preference for the D-aldehyde and shows an inversion of the diastereoselectivity. Loss of aldolase activity; when associated with Q-73 and F-209." evidence="2 3">
    <original>Y</original>
    <variation>F</variation>
    <location>
        <position position="113"/>
    </location>
</feature>
<feature type="mutagenesis site" description="Has a slight preference for the D-aldehyde and shows an inversion of the diastereoselectivity. Loss of aldolase activity; when associated with W-206." evidence="2">
    <original>F</original>
    <variation>A</variation>
    <location>
        <position position="131"/>
    </location>
</feature>
<feature type="mutagenesis site" description="Decrease of aldolase activity mostly due to a decrease of the affinity for L-fuculose 1-phosphate (Fuc1P). Loss of aldolase activity; when associated with A-131." evidence="2">
    <original>F</original>
    <variation>W</variation>
    <location>
        <position position="206"/>
    </location>
</feature>
<feature type="mutagenesis site" description="Loss of aldolase activity. Has a slight preference for the D-aldehyde." evidence="2">
    <location>
        <begin position="207"/>
        <end position="215"/>
    </location>
</feature>
<feature type="mutagenesis site" description="Slowly inactivated and unable to discriminate between the enantiomers. Shows an inversion of the diastereoselectivity. Loss of aldolase activity; when associated with Q-73 and F-113." evidence="2 3">
    <original>Y</original>
    <variation>F</variation>
    <location>
        <position position="209"/>
    </location>
</feature>
<feature type="mutagenesis site" description="Decrease of aldolase activity mostly due to a decrease of the affinity for L-fuculose 1-phosphate (Fuc1P)." evidence="2">
    <location>
        <begin position="211"/>
        <end position="215"/>
    </location>
</feature>
<feature type="helix" evidence="34">
    <location>
        <begin position="3"/>
        <end position="19"/>
    </location>
</feature>
<feature type="helix" evidence="35">
    <location>
        <begin position="24"/>
        <end position="26"/>
    </location>
</feature>
<feature type="strand" evidence="34">
    <location>
        <begin position="29"/>
        <end position="34"/>
    </location>
</feature>
<feature type="strand" evidence="34">
    <location>
        <begin position="37"/>
        <end position="40"/>
    </location>
</feature>
<feature type="strand" evidence="33">
    <location>
        <begin position="42"/>
        <end position="44"/>
    </location>
</feature>
<feature type="helix" evidence="34">
    <location>
        <begin position="47"/>
        <end position="49"/>
    </location>
</feature>
<feature type="helix" evidence="34">
    <location>
        <begin position="52"/>
        <end position="54"/>
    </location>
</feature>
<feature type="strand" evidence="34">
    <location>
        <begin position="56"/>
        <end position="58"/>
    </location>
</feature>
<feature type="helix" evidence="34">
    <location>
        <begin position="74"/>
        <end position="83"/>
    </location>
</feature>
<feature type="strand" evidence="34">
    <location>
        <begin position="89"/>
        <end position="93"/>
    </location>
</feature>
<feature type="helix" evidence="34">
    <location>
        <begin position="96"/>
        <end position="104"/>
    </location>
</feature>
<feature type="strand" evidence="34">
    <location>
        <begin position="110"/>
        <end position="112"/>
    </location>
</feature>
<feature type="helix" evidence="34">
    <location>
        <begin position="113"/>
        <end position="118"/>
    </location>
</feature>
<feature type="strand" evidence="32">
    <location>
        <begin position="120"/>
        <end position="123"/>
    </location>
</feature>
<feature type="strand" evidence="31">
    <location>
        <begin position="131"/>
        <end position="133"/>
    </location>
</feature>
<feature type="helix" evidence="34">
    <location>
        <begin position="134"/>
        <end position="143"/>
    </location>
</feature>
<feature type="strand" evidence="35">
    <location>
        <begin position="144"/>
        <end position="146"/>
    </location>
</feature>
<feature type="strand" evidence="34">
    <location>
        <begin position="148"/>
        <end position="152"/>
    </location>
</feature>
<feature type="turn" evidence="34">
    <location>
        <begin position="153"/>
        <end position="155"/>
    </location>
</feature>
<feature type="strand" evidence="34">
    <location>
        <begin position="156"/>
        <end position="163"/>
    </location>
</feature>
<feature type="helix" evidence="34">
    <location>
        <begin position="164"/>
        <end position="185"/>
    </location>
</feature>
<feature type="helix" evidence="34">
    <location>
        <begin position="196"/>
        <end position="205"/>
    </location>
</feature>